<proteinExistence type="inferred from homology"/>
<feature type="chain" id="PRO_0000201533" description="Magnesium transport protein CorA">
    <location>
        <begin position="1"/>
        <end position="316"/>
    </location>
</feature>
<feature type="topological domain" description="Cytoplasmic" evidence="3">
    <location>
        <begin position="1"/>
        <end position="254"/>
    </location>
</feature>
<feature type="transmembrane region" description="Helical" evidence="3">
    <location>
        <begin position="255"/>
        <end position="273"/>
    </location>
</feature>
<feature type="topological domain" description="Periplasmic" evidence="3">
    <location>
        <begin position="274"/>
        <end position="287"/>
    </location>
</feature>
<feature type="transmembrane region" description="Helical" evidence="3">
    <location>
        <begin position="288"/>
        <end position="310"/>
    </location>
</feature>
<feature type="topological domain" description="Cytoplasmic" evidence="3">
    <location>
        <begin position="311"/>
        <end position="316"/>
    </location>
</feature>
<feature type="short sequence motif" description="Probable selectivity filter" evidence="2">
    <location>
        <begin position="277"/>
        <end position="279"/>
    </location>
</feature>
<feature type="site" description="Essential for ion permeation" evidence="2">
    <location>
        <position position="253"/>
    </location>
</feature>
<name>CORA_SHIFL</name>
<comment type="function">
    <text evidence="1 2">Mediates influx of magnesium ions (By similarity). Alternates between open and closed states. Activated by low cytoplasmic Mg(2+) levels. Inactive when cytoplasmic Mg(2+) levels are high (By similarity).</text>
</comment>
<comment type="catalytic activity">
    <reaction evidence="1">
        <text>Mg(2+)(in) = Mg(2+)(out)</text>
        <dbReference type="Rhea" id="RHEA:29827"/>
        <dbReference type="ChEBI" id="CHEBI:18420"/>
    </reaction>
</comment>
<comment type="subunit">
    <text evidence="2">Homopentamer. In the absence of Mg(2+), interactions between subunits are weakened, and dimers, trimers and tetramers can be observed in vitro (By similarity).</text>
</comment>
<comment type="subcellular location">
    <subcellularLocation>
        <location evidence="1">Cell inner membrane</location>
        <topology evidence="2">Multi-pass membrane protein</topology>
    </subcellularLocation>
</comment>
<comment type="domain">
    <text evidence="2">The central ion permeation pathway is formed by the first transmembrane domain from each of the five subunits. Mg(2+) binding strengthens interactions between subunits and leads to the formation of a symmetrical homopentamer surrounding a closed ion permeation pathway. Low Mg(2+) concentrations trigger both a conformation change within each subunit and a loosening of the interactions between subunits. This results in an open ion conduction pathway. In addition, this results in a less symmetrical shape of the whole complex.</text>
</comment>
<comment type="similarity">
    <text evidence="4">Belongs to the CorA metal ion transporter (MIT) (TC 1.A.35) family.</text>
</comment>
<keyword id="KW-0997">Cell inner membrane</keyword>
<keyword id="KW-1003">Cell membrane</keyword>
<keyword id="KW-0406">Ion transport</keyword>
<keyword id="KW-0460">Magnesium</keyword>
<keyword id="KW-0472">Membrane</keyword>
<keyword id="KW-1185">Reference proteome</keyword>
<keyword id="KW-0812">Transmembrane</keyword>
<keyword id="KW-1133">Transmembrane helix</keyword>
<keyword id="KW-0813">Transport</keyword>
<accession>P0ABI7</accession>
<accession>P27841</accession>
<reference key="1">
    <citation type="journal article" date="2002" name="Nucleic Acids Res.">
        <title>Genome sequence of Shigella flexneri 2a: insights into pathogenicity through comparison with genomes of Escherichia coli K12 and O157.</title>
        <authorList>
            <person name="Jin Q."/>
            <person name="Yuan Z."/>
            <person name="Xu J."/>
            <person name="Wang Y."/>
            <person name="Shen Y."/>
            <person name="Lu W."/>
            <person name="Wang J."/>
            <person name="Liu H."/>
            <person name="Yang J."/>
            <person name="Yang F."/>
            <person name="Zhang X."/>
            <person name="Zhang J."/>
            <person name="Yang G."/>
            <person name="Wu H."/>
            <person name="Qu D."/>
            <person name="Dong J."/>
            <person name="Sun L."/>
            <person name="Xue Y."/>
            <person name="Zhao A."/>
            <person name="Gao Y."/>
            <person name="Zhu J."/>
            <person name="Kan B."/>
            <person name="Ding K."/>
            <person name="Chen S."/>
            <person name="Cheng H."/>
            <person name="Yao Z."/>
            <person name="He B."/>
            <person name="Chen R."/>
            <person name="Ma D."/>
            <person name="Qiang B."/>
            <person name="Wen Y."/>
            <person name="Hou Y."/>
            <person name="Yu J."/>
        </authorList>
    </citation>
    <scope>NUCLEOTIDE SEQUENCE [LARGE SCALE GENOMIC DNA]</scope>
    <source>
        <strain>301 / Serotype 2a</strain>
    </source>
</reference>
<reference key="2">
    <citation type="journal article" date="2003" name="Infect. Immun.">
        <title>Complete genome sequence and comparative genomics of Shigella flexneri serotype 2a strain 2457T.</title>
        <authorList>
            <person name="Wei J."/>
            <person name="Goldberg M.B."/>
            <person name="Burland V."/>
            <person name="Venkatesan M.M."/>
            <person name="Deng W."/>
            <person name="Fournier G."/>
            <person name="Mayhew G.F."/>
            <person name="Plunkett G. III"/>
            <person name="Rose D.J."/>
            <person name="Darling A."/>
            <person name="Mau B."/>
            <person name="Perna N.T."/>
            <person name="Payne S.M."/>
            <person name="Runyen-Janecky L.J."/>
            <person name="Zhou S."/>
            <person name="Schwartz D.C."/>
            <person name="Blattner F.R."/>
        </authorList>
    </citation>
    <scope>NUCLEOTIDE SEQUENCE [LARGE SCALE GENOMIC DNA]</scope>
    <source>
        <strain>ATCC 700930 / 2457T / Serotype 2a</strain>
    </source>
</reference>
<organism>
    <name type="scientific">Shigella flexneri</name>
    <dbReference type="NCBI Taxonomy" id="623"/>
    <lineage>
        <taxon>Bacteria</taxon>
        <taxon>Pseudomonadati</taxon>
        <taxon>Pseudomonadota</taxon>
        <taxon>Gammaproteobacteria</taxon>
        <taxon>Enterobacterales</taxon>
        <taxon>Enterobacteriaceae</taxon>
        <taxon>Shigella</taxon>
    </lineage>
</organism>
<sequence length="316" mass="36590">MLSAFQLENNRLTRLEVEESQPLVNAVWIDLVEPDDDERLRVQSELGQSLATRPELEDIEASARFFEDDDGLHIHSFFFFEDAEDHAGNSTVAFTIRDGRLFTLRERELPAFRLYRMRARSQSMVDGNAYELLLDLFETKIEQLADEIENIYSDLEQLSRVIMEGHQGDEYDEALSTLAELEDIGWKVRLCLMDTQRALNFLVRKARLPGGQLEQAREILRDIESLLPHNESLFQKVNFLMQAAMGFINIEQNRIIKIFSVVSVVFLPPTLVASSYGMNFEFMPELKWSFGYPGAIIFMILAGLAPYLYFKRKNWL</sequence>
<gene>
    <name type="primary">corA</name>
    <name type="ordered locus">SF3894</name>
    <name type="ordered locus">S3861</name>
</gene>
<evidence type="ECO:0000250" key="1">
    <source>
        <dbReference type="UniProtKB" id="P0ABI4"/>
    </source>
</evidence>
<evidence type="ECO:0000250" key="2">
    <source>
        <dbReference type="UniProtKB" id="Q9WZ31"/>
    </source>
</evidence>
<evidence type="ECO:0000255" key="3"/>
<evidence type="ECO:0000305" key="4"/>
<dbReference type="EMBL" id="AE005674">
    <property type="protein sequence ID" value="AAN45329.2"/>
    <property type="molecule type" value="Genomic_DNA"/>
</dbReference>
<dbReference type="EMBL" id="AE014073">
    <property type="protein sequence ID" value="AAP18869.1"/>
    <property type="molecule type" value="Genomic_DNA"/>
</dbReference>
<dbReference type="RefSeq" id="NP_709622.2">
    <property type="nucleotide sequence ID" value="NC_004337.2"/>
</dbReference>
<dbReference type="RefSeq" id="WP_000947159.1">
    <property type="nucleotide sequence ID" value="NZ_WPGW01000275.1"/>
</dbReference>
<dbReference type="SMR" id="P0ABI7"/>
<dbReference type="STRING" id="198214.SF3894"/>
<dbReference type="PaxDb" id="198214-SF3894"/>
<dbReference type="GeneID" id="1027370"/>
<dbReference type="GeneID" id="93778125"/>
<dbReference type="KEGG" id="sfl:SF3894"/>
<dbReference type="KEGG" id="sfx:S3861"/>
<dbReference type="PATRIC" id="fig|198214.7.peg.4593"/>
<dbReference type="HOGENOM" id="CLU_007127_5_0_6"/>
<dbReference type="Proteomes" id="UP000001006">
    <property type="component" value="Chromosome"/>
</dbReference>
<dbReference type="Proteomes" id="UP000002673">
    <property type="component" value="Chromosome"/>
</dbReference>
<dbReference type="GO" id="GO:0005886">
    <property type="term" value="C:plasma membrane"/>
    <property type="evidence" value="ECO:0007669"/>
    <property type="project" value="UniProtKB-SubCell"/>
</dbReference>
<dbReference type="GO" id="GO:0015087">
    <property type="term" value="F:cobalt ion transmembrane transporter activity"/>
    <property type="evidence" value="ECO:0007669"/>
    <property type="project" value="InterPro"/>
</dbReference>
<dbReference type="GO" id="GO:0015095">
    <property type="term" value="F:magnesium ion transmembrane transporter activity"/>
    <property type="evidence" value="ECO:0007669"/>
    <property type="project" value="InterPro"/>
</dbReference>
<dbReference type="GO" id="GO:0015099">
    <property type="term" value="F:nickel cation transmembrane transporter activity"/>
    <property type="evidence" value="ECO:0007669"/>
    <property type="project" value="TreeGrafter"/>
</dbReference>
<dbReference type="CDD" id="cd12835">
    <property type="entry name" value="EcCorA-like_1"/>
    <property type="match status" value="1"/>
</dbReference>
<dbReference type="FunFam" id="1.20.58.340:FF:000001">
    <property type="entry name" value="Magnesium transport protein CorA"/>
    <property type="match status" value="1"/>
</dbReference>
<dbReference type="Gene3D" id="1.20.58.340">
    <property type="entry name" value="Magnesium transport protein CorA, transmembrane region"/>
    <property type="match status" value="1"/>
</dbReference>
<dbReference type="InterPro" id="IPR045861">
    <property type="entry name" value="CorA_cytoplasmic_dom"/>
</dbReference>
<dbReference type="InterPro" id="IPR050829">
    <property type="entry name" value="CorA_MIT"/>
</dbReference>
<dbReference type="InterPro" id="IPR045863">
    <property type="entry name" value="CorA_TM1_TM2"/>
</dbReference>
<dbReference type="InterPro" id="IPR004488">
    <property type="entry name" value="Mg/Co-transport_prot_CorA"/>
</dbReference>
<dbReference type="InterPro" id="IPR002523">
    <property type="entry name" value="MgTranspt_CorA/ZnTranspt_ZntB"/>
</dbReference>
<dbReference type="NCBIfam" id="TIGR00383">
    <property type="entry name" value="corA"/>
    <property type="match status" value="1"/>
</dbReference>
<dbReference type="PANTHER" id="PTHR47685">
    <property type="entry name" value="MAGNESIUM TRANSPORT PROTEIN CORA"/>
    <property type="match status" value="1"/>
</dbReference>
<dbReference type="PANTHER" id="PTHR47685:SF1">
    <property type="entry name" value="MAGNESIUM TRANSPORT PROTEIN CORA"/>
    <property type="match status" value="1"/>
</dbReference>
<dbReference type="Pfam" id="PF01544">
    <property type="entry name" value="CorA"/>
    <property type="match status" value="1"/>
</dbReference>
<dbReference type="SUPFAM" id="SSF143865">
    <property type="entry name" value="CorA soluble domain-like"/>
    <property type="match status" value="1"/>
</dbReference>
<dbReference type="SUPFAM" id="SSF144083">
    <property type="entry name" value="Magnesium transport protein CorA, transmembrane region"/>
    <property type="match status" value="1"/>
</dbReference>
<protein>
    <recommendedName>
        <fullName>Magnesium transport protein CorA</fullName>
    </recommendedName>
</protein>